<gene>
    <name evidence="1" type="primary">bpt</name>
    <name type="ordered locus">Rmet_1214</name>
</gene>
<keyword id="KW-0012">Acyltransferase</keyword>
<keyword id="KW-0963">Cytoplasm</keyword>
<keyword id="KW-1185">Reference proteome</keyword>
<keyword id="KW-0808">Transferase</keyword>
<sequence>MSKLKELPLSALQFYATAPYACSYLEGRMARSQVATPAHLINADVYSRLVRAGFRRSGIFTYRPYCDECRACTPCRVLVDQFRPDRSQRRAWRDHQGLQALVAPLTYVEEHYALYLLYQSMRHAGGGMDQDSRDQYEQFLLQSRVNSRLVEFREPPGSPEAGRLRMVSMIDVLDDGLSSVYTFYDPLIVGASYGTYNILWQINQTRELGLPHLYLGYWIADSRKMAYKARFQPLQVLTGNQWHTFKAPAEASGQPAPDPALE</sequence>
<accession>Q1LP26</accession>
<comment type="function">
    <text evidence="1">Functions in the N-end rule pathway of protein degradation where it conjugates Leu from its aminoacyl-tRNA to the N-termini of proteins containing an N-terminal aspartate or glutamate.</text>
</comment>
<comment type="catalytic activity">
    <reaction evidence="1">
        <text>N-terminal L-glutamyl-[protein] + L-leucyl-tRNA(Leu) = N-terminal L-leucyl-L-glutamyl-[protein] + tRNA(Leu) + H(+)</text>
        <dbReference type="Rhea" id="RHEA:50412"/>
        <dbReference type="Rhea" id="RHEA-COMP:9613"/>
        <dbReference type="Rhea" id="RHEA-COMP:9622"/>
        <dbReference type="Rhea" id="RHEA-COMP:12664"/>
        <dbReference type="Rhea" id="RHEA-COMP:12668"/>
        <dbReference type="ChEBI" id="CHEBI:15378"/>
        <dbReference type="ChEBI" id="CHEBI:64721"/>
        <dbReference type="ChEBI" id="CHEBI:78442"/>
        <dbReference type="ChEBI" id="CHEBI:78494"/>
        <dbReference type="ChEBI" id="CHEBI:133041"/>
        <dbReference type="EC" id="2.3.2.29"/>
    </reaction>
</comment>
<comment type="catalytic activity">
    <reaction evidence="1">
        <text>N-terminal L-aspartyl-[protein] + L-leucyl-tRNA(Leu) = N-terminal L-leucyl-L-aspartyl-[protein] + tRNA(Leu) + H(+)</text>
        <dbReference type="Rhea" id="RHEA:50420"/>
        <dbReference type="Rhea" id="RHEA-COMP:9613"/>
        <dbReference type="Rhea" id="RHEA-COMP:9622"/>
        <dbReference type="Rhea" id="RHEA-COMP:12669"/>
        <dbReference type="Rhea" id="RHEA-COMP:12674"/>
        <dbReference type="ChEBI" id="CHEBI:15378"/>
        <dbReference type="ChEBI" id="CHEBI:64720"/>
        <dbReference type="ChEBI" id="CHEBI:78442"/>
        <dbReference type="ChEBI" id="CHEBI:78494"/>
        <dbReference type="ChEBI" id="CHEBI:133042"/>
        <dbReference type="EC" id="2.3.2.29"/>
    </reaction>
</comment>
<comment type="subcellular location">
    <subcellularLocation>
        <location evidence="1">Cytoplasm</location>
    </subcellularLocation>
</comment>
<comment type="similarity">
    <text evidence="1">Belongs to the R-transferase family. Bpt subfamily.</text>
</comment>
<evidence type="ECO:0000255" key="1">
    <source>
        <dbReference type="HAMAP-Rule" id="MF_00689"/>
    </source>
</evidence>
<proteinExistence type="inferred from homology"/>
<name>BPT_CUPMC</name>
<organism>
    <name type="scientific">Cupriavidus metallidurans (strain ATCC 43123 / DSM 2839 / NBRC 102507 / CH34)</name>
    <name type="common">Ralstonia metallidurans</name>
    <dbReference type="NCBI Taxonomy" id="266264"/>
    <lineage>
        <taxon>Bacteria</taxon>
        <taxon>Pseudomonadati</taxon>
        <taxon>Pseudomonadota</taxon>
        <taxon>Betaproteobacteria</taxon>
        <taxon>Burkholderiales</taxon>
        <taxon>Burkholderiaceae</taxon>
        <taxon>Cupriavidus</taxon>
    </lineage>
</organism>
<feature type="chain" id="PRO_0000263206" description="Aspartate/glutamate leucyltransferase">
    <location>
        <begin position="1"/>
        <end position="262"/>
    </location>
</feature>
<protein>
    <recommendedName>
        <fullName evidence="1">Aspartate/glutamate leucyltransferase</fullName>
        <ecNumber evidence="1">2.3.2.29</ecNumber>
    </recommendedName>
</protein>
<reference key="1">
    <citation type="journal article" date="2010" name="PLoS ONE">
        <title>The complete genome sequence of Cupriavidus metallidurans strain CH34, a master survivalist in harsh and anthropogenic environments.</title>
        <authorList>
            <person name="Janssen P.J."/>
            <person name="Van Houdt R."/>
            <person name="Moors H."/>
            <person name="Monsieurs P."/>
            <person name="Morin N."/>
            <person name="Michaux A."/>
            <person name="Benotmane M.A."/>
            <person name="Leys N."/>
            <person name="Vallaeys T."/>
            <person name="Lapidus A."/>
            <person name="Monchy S."/>
            <person name="Medigue C."/>
            <person name="Taghavi S."/>
            <person name="McCorkle S."/>
            <person name="Dunn J."/>
            <person name="van der Lelie D."/>
            <person name="Mergeay M."/>
        </authorList>
    </citation>
    <scope>NUCLEOTIDE SEQUENCE [LARGE SCALE GENOMIC DNA]</scope>
    <source>
        <strain>ATCC 43123 / DSM 2839 / NBRC 102507 / CH34</strain>
    </source>
</reference>
<dbReference type="EC" id="2.3.2.29" evidence="1"/>
<dbReference type="EMBL" id="CP000352">
    <property type="protein sequence ID" value="ABF08100.1"/>
    <property type="molecule type" value="Genomic_DNA"/>
</dbReference>
<dbReference type="RefSeq" id="WP_011515990.1">
    <property type="nucleotide sequence ID" value="NC_007973.1"/>
</dbReference>
<dbReference type="SMR" id="Q1LP26"/>
<dbReference type="STRING" id="266264.Rmet_1214"/>
<dbReference type="KEGG" id="rme:Rmet_1214"/>
<dbReference type="eggNOG" id="COG2935">
    <property type="taxonomic scope" value="Bacteria"/>
</dbReference>
<dbReference type="HOGENOM" id="CLU_077607_0_0_4"/>
<dbReference type="Proteomes" id="UP000002429">
    <property type="component" value="Chromosome"/>
</dbReference>
<dbReference type="GO" id="GO:0005737">
    <property type="term" value="C:cytoplasm"/>
    <property type="evidence" value="ECO:0007669"/>
    <property type="project" value="UniProtKB-SubCell"/>
</dbReference>
<dbReference type="GO" id="GO:0004057">
    <property type="term" value="F:arginyl-tRNA--protein transferase activity"/>
    <property type="evidence" value="ECO:0007669"/>
    <property type="project" value="InterPro"/>
</dbReference>
<dbReference type="GO" id="GO:0008914">
    <property type="term" value="F:leucyl-tRNA--protein transferase activity"/>
    <property type="evidence" value="ECO:0007669"/>
    <property type="project" value="UniProtKB-UniRule"/>
</dbReference>
<dbReference type="GO" id="GO:0071596">
    <property type="term" value="P:ubiquitin-dependent protein catabolic process via the N-end rule pathway"/>
    <property type="evidence" value="ECO:0007669"/>
    <property type="project" value="InterPro"/>
</dbReference>
<dbReference type="HAMAP" id="MF_00689">
    <property type="entry name" value="Bpt"/>
    <property type="match status" value="1"/>
</dbReference>
<dbReference type="InterPro" id="IPR016181">
    <property type="entry name" value="Acyl_CoA_acyltransferase"/>
</dbReference>
<dbReference type="InterPro" id="IPR017138">
    <property type="entry name" value="Asp_Glu_LeuTrfase"/>
</dbReference>
<dbReference type="InterPro" id="IPR030700">
    <property type="entry name" value="N-end_Aminoacyl_Trfase"/>
</dbReference>
<dbReference type="InterPro" id="IPR007472">
    <property type="entry name" value="N-end_Aminoacyl_Trfase_C"/>
</dbReference>
<dbReference type="InterPro" id="IPR007471">
    <property type="entry name" value="N-end_Aminoacyl_Trfase_N"/>
</dbReference>
<dbReference type="NCBIfam" id="NF002341">
    <property type="entry name" value="PRK01305.1-1"/>
    <property type="match status" value="1"/>
</dbReference>
<dbReference type="NCBIfam" id="NF002342">
    <property type="entry name" value="PRK01305.1-3"/>
    <property type="match status" value="1"/>
</dbReference>
<dbReference type="NCBIfam" id="NF002346">
    <property type="entry name" value="PRK01305.2-3"/>
    <property type="match status" value="1"/>
</dbReference>
<dbReference type="PANTHER" id="PTHR21367">
    <property type="entry name" value="ARGININE-TRNA-PROTEIN TRANSFERASE 1"/>
    <property type="match status" value="1"/>
</dbReference>
<dbReference type="PANTHER" id="PTHR21367:SF1">
    <property type="entry name" value="ARGINYL-TRNA--PROTEIN TRANSFERASE 1"/>
    <property type="match status" value="1"/>
</dbReference>
<dbReference type="Pfam" id="PF04377">
    <property type="entry name" value="ATE_C"/>
    <property type="match status" value="1"/>
</dbReference>
<dbReference type="Pfam" id="PF04376">
    <property type="entry name" value="ATE_N"/>
    <property type="match status" value="1"/>
</dbReference>
<dbReference type="PIRSF" id="PIRSF037208">
    <property type="entry name" value="ATE_pro_prd"/>
    <property type="match status" value="1"/>
</dbReference>
<dbReference type="SUPFAM" id="SSF55729">
    <property type="entry name" value="Acyl-CoA N-acyltransferases (Nat)"/>
    <property type="match status" value="1"/>
</dbReference>